<feature type="chain" id="PRO_0000317145" description="Nucleosome assembly protein 1-like 5">
    <location>
        <begin position="1"/>
        <end position="155"/>
    </location>
</feature>
<feature type="region of interest" description="Disordered" evidence="2">
    <location>
        <begin position="1"/>
        <end position="60"/>
    </location>
</feature>
<feature type="region of interest" description="Disordered" evidence="2">
    <location>
        <begin position="119"/>
        <end position="155"/>
    </location>
</feature>
<feature type="coiled-coil region" evidence="1">
    <location>
        <begin position="68"/>
        <end position="94"/>
    </location>
</feature>
<feature type="compositionally biased region" description="Basic and acidic residues" evidence="2">
    <location>
        <begin position="1"/>
        <end position="16"/>
    </location>
</feature>
<feature type="compositionally biased region" description="Low complexity" evidence="2">
    <location>
        <begin position="27"/>
        <end position="49"/>
    </location>
</feature>
<feature type="compositionally biased region" description="Acidic residues" evidence="2">
    <location>
        <begin position="122"/>
        <end position="142"/>
    </location>
</feature>
<protein>
    <recommendedName>
        <fullName>Nucleosome assembly protein 1-like 5</fullName>
    </recommendedName>
</protein>
<keyword id="KW-0175">Coiled coil</keyword>
<keyword id="KW-0539">Nucleus</keyword>
<keyword id="KW-1185">Reference proteome</keyword>
<gene>
    <name type="primary">Nap1l5</name>
</gene>
<name>NP1L5_RAT</name>
<evidence type="ECO:0000255" key="1"/>
<evidence type="ECO:0000256" key="2">
    <source>
        <dbReference type="SAM" id="MobiDB-lite"/>
    </source>
</evidence>
<evidence type="ECO:0000305" key="3"/>
<organism>
    <name type="scientific">Rattus norvegicus</name>
    <name type="common">Rat</name>
    <dbReference type="NCBI Taxonomy" id="10116"/>
    <lineage>
        <taxon>Eukaryota</taxon>
        <taxon>Metazoa</taxon>
        <taxon>Chordata</taxon>
        <taxon>Craniata</taxon>
        <taxon>Vertebrata</taxon>
        <taxon>Euteleostomi</taxon>
        <taxon>Mammalia</taxon>
        <taxon>Eutheria</taxon>
        <taxon>Euarchontoglires</taxon>
        <taxon>Glires</taxon>
        <taxon>Rodentia</taxon>
        <taxon>Myomorpha</taxon>
        <taxon>Muroidea</taxon>
        <taxon>Muridae</taxon>
        <taxon>Murinae</taxon>
        <taxon>Rattus</taxon>
    </lineage>
</organism>
<sequence length="155" mass="16858">MADPEKQGPAESRAEDEVMEGAQGGEDAATGDSATAPAAEEPQAPAENAPKPKNDFIESLPNPVKCRVLALKKLQKRCDKIEAKFDKEFQALEKKYNDIYKPLLAKIQELTGEMEGCAWTLEGEDDEDDEEEEDEEEEEEEAAAGATGGPDSAEK</sequence>
<reference key="1">
    <citation type="journal article" date="2004" name="Genome Res.">
        <title>The status, quality, and expansion of the NIH full-length cDNA project: the Mammalian Gene Collection (MGC).</title>
        <authorList>
            <consortium name="The MGC Project Team"/>
        </authorList>
    </citation>
    <scope>NUCLEOTIDE SEQUENCE [LARGE SCALE MRNA]</scope>
    <source>
        <tissue>Brain</tissue>
    </source>
</reference>
<dbReference type="EMBL" id="BC087702">
    <property type="protein sequence ID" value="AAH87702.1"/>
    <property type="molecule type" value="mRNA"/>
</dbReference>
<dbReference type="RefSeq" id="NP_001037758.1">
    <property type="nucleotide sequence ID" value="NM_001044293.1"/>
</dbReference>
<dbReference type="RefSeq" id="XP_006236649.1">
    <property type="nucleotide sequence ID" value="XM_006236587.5"/>
</dbReference>
<dbReference type="SMR" id="Q5PPG6"/>
<dbReference type="BioGRID" id="603667">
    <property type="interactions" value="1"/>
</dbReference>
<dbReference type="FunCoup" id="Q5PPG6">
    <property type="interactions" value="468"/>
</dbReference>
<dbReference type="STRING" id="10116.ENSRNOP00000010263"/>
<dbReference type="PhosphoSitePlus" id="Q5PPG6"/>
<dbReference type="PaxDb" id="10116-ENSRNOP00000010263"/>
<dbReference type="Ensembl" id="ENSRNOT00000010263.4">
    <property type="protein sequence ID" value="ENSRNOP00000010263.2"/>
    <property type="gene ID" value="ENSRNOG00000007808.4"/>
</dbReference>
<dbReference type="GeneID" id="688843"/>
<dbReference type="KEGG" id="rno:688843"/>
<dbReference type="UCSC" id="RGD:1584123">
    <property type="organism name" value="rat"/>
</dbReference>
<dbReference type="AGR" id="RGD:1584123"/>
<dbReference type="CTD" id="266812"/>
<dbReference type="RGD" id="1584123">
    <property type="gene designation" value="Nap1l5"/>
</dbReference>
<dbReference type="eggNOG" id="KOG1507">
    <property type="taxonomic scope" value="Eukaryota"/>
</dbReference>
<dbReference type="GeneTree" id="ENSGT00730000111564"/>
<dbReference type="HOGENOM" id="CLU_133891_0_0_1"/>
<dbReference type="InParanoid" id="Q5PPG6"/>
<dbReference type="OMA" id="ATKPKND"/>
<dbReference type="OrthoDB" id="27325at2759"/>
<dbReference type="PRO" id="PR:Q5PPG6"/>
<dbReference type="Proteomes" id="UP000002494">
    <property type="component" value="Chromosome 4"/>
</dbReference>
<dbReference type="Bgee" id="ENSRNOG00000007808">
    <property type="expression patterns" value="Expressed in cerebellum and 18 other cell types or tissues"/>
</dbReference>
<dbReference type="GO" id="GO:0005634">
    <property type="term" value="C:nucleus"/>
    <property type="evidence" value="ECO:0007669"/>
    <property type="project" value="UniProtKB-SubCell"/>
</dbReference>
<dbReference type="GO" id="GO:0006334">
    <property type="term" value="P:nucleosome assembly"/>
    <property type="evidence" value="ECO:0007669"/>
    <property type="project" value="InterPro"/>
</dbReference>
<dbReference type="FunFam" id="1.20.5.1500:FF:000001">
    <property type="entry name" value="Nucleosome assembly protein 1-like 1"/>
    <property type="match status" value="1"/>
</dbReference>
<dbReference type="Gene3D" id="1.20.5.1500">
    <property type="match status" value="1"/>
</dbReference>
<dbReference type="InterPro" id="IPR037231">
    <property type="entry name" value="NAP-like_sf"/>
</dbReference>
<dbReference type="InterPro" id="IPR002164">
    <property type="entry name" value="NAP_family"/>
</dbReference>
<dbReference type="PANTHER" id="PTHR11875">
    <property type="entry name" value="TESTIS-SPECIFIC Y-ENCODED PROTEIN"/>
    <property type="match status" value="1"/>
</dbReference>
<dbReference type="Pfam" id="PF00956">
    <property type="entry name" value="NAP"/>
    <property type="match status" value="1"/>
</dbReference>
<dbReference type="SUPFAM" id="SSF143113">
    <property type="entry name" value="NAP-like"/>
    <property type="match status" value="1"/>
</dbReference>
<accession>Q5PPG6</accession>
<comment type="subcellular location">
    <subcellularLocation>
        <location evidence="3">Nucleus</location>
    </subcellularLocation>
</comment>
<comment type="similarity">
    <text evidence="3">Belongs to the nucleosome assembly protein (NAP) family.</text>
</comment>
<proteinExistence type="evidence at transcript level"/>